<evidence type="ECO:0000250" key="1">
    <source>
        <dbReference type="UniProtKB" id="P56761"/>
    </source>
</evidence>
<evidence type="ECO:0000255" key="2">
    <source>
        <dbReference type="HAMAP-Rule" id="MF_01383"/>
    </source>
</evidence>
<gene>
    <name evidence="2" type="primary">psbD</name>
</gene>
<name>PSBD_PLETE</name>
<geneLocation type="chloroplast"/>
<dbReference type="EC" id="1.10.3.9" evidence="2"/>
<dbReference type="EMBL" id="EF506945">
    <property type="protein sequence ID" value="ABO69297.1"/>
    <property type="molecule type" value="Genomic_DNA"/>
</dbReference>
<dbReference type="RefSeq" id="YP_001382153.1">
    <property type="nucleotide sequence ID" value="NC_009681.1"/>
</dbReference>
<dbReference type="SMR" id="A6YG76"/>
<dbReference type="GeneID" id="5383802"/>
<dbReference type="GO" id="GO:0009535">
    <property type="term" value="C:chloroplast thylakoid membrane"/>
    <property type="evidence" value="ECO:0007669"/>
    <property type="project" value="UniProtKB-SubCell"/>
</dbReference>
<dbReference type="GO" id="GO:0009523">
    <property type="term" value="C:photosystem II"/>
    <property type="evidence" value="ECO:0007669"/>
    <property type="project" value="UniProtKB-KW"/>
</dbReference>
<dbReference type="GO" id="GO:0016168">
    <property type="term" value="F:chlorophyll binding"/>
    <property type="evidence" value="ECO:0007669"/>
    <property type="project" value="UniProtKB-UniRule"/>
</dbReference>
<dbReference type="GO" id="GO:0045156">
    <property type="term" value="F:electron transporter, transferring electrons within the cyclic electron transport pathway of photosynthesis activity"/>
    <property type="evidence" value="ECO:0007669"/>
    <property type="project" value="InterPro"/>
</dbReference>
<dbReference type="GO" id="GO:0005506">
    <property type="term" value="F:iron ion binding"/>
    <property type="evidence" value="ECO:0007669"/>
    <property type="project" value="UniProtKB-UniRule"/>
</dbReference>
<dbReference type="GO" id="GO:0010242">
    <property type="term" value="F:oxygen evolving activity"/>
    <property type="evidence" value="ECO:0007669"/>
    <property type="project" value="UniProtKB-EC"/>
</dbReference>
<dbReference type="GO" id="GO:0009772">
    <property type="term" value="P:photosynthetic electron transport in photosystem II"/>
    <property type="evidence" value="ECO:0007669"/>
    <property type="project" value="InterPro"/>
</dbReference>
<dbReference type="CDD" id="cd09288">
    <property type="entry name" value="Photosystem-II_D2"/>
    <property type="match status" value="1"/>
</dbReference>
<dbReference type="FunFam" id="1.20.85.10:FF:000001">
    <property type="entry name" value="photosystem II D2 protein-like"/>
    <property type="match status" value="1"/>
</dbReference>
<dbReference type="Gene3D" id="1.20.85.10">
    <property type="entry name" value="Photosystem II protein D1-like"/>
    <property type="match status" value="1"/>
</dbReference>
<dbReference type="HAMAP" id="MF_01383">
    <property type="entry name" value="PSII_PsbD_D2"/>
    <property type="match status" value="1"/>
</dbReference>
<dbReference type="InterPro" id="IPR055266">
    <property type="entry name" value="D1/D2"/>
</dbReference>
<dbReference type="InterPro" id="IPR036854">
    <property type="entry name" value="Photo_II_D1/D2_sf"/>
</dbReference>
<dbReference type="InterPro" id="IPR000484">
    <property type="entry name" value="Photo_RC_L/M"/>
</dbReference>
<dbReference type="InterPro" id="IPR055265">
    <property type="entry name" value="Photo_RC_L/M_CS"/>
</dbReference>
<dbReference type="InterPro" id="IPR005868">
    <property type="entry name" value="PSII_PsbD/D2"/>
</dbReference>
<dbReference type="NCBIfam" id="TIGR01152">
    <property type="entry name" value="psbD"/>
    <property type="match status" value="1"/>
</dbReference>
<dbReference type="PANTHER" id="PTHR33149:SF12">
    <property type="entry name" value="PHOTOSYSTEM II D2 PROTEIN"/>
    <property type="match status" value="1"/>
</dbReference>
<dbReference type="PANTHER" id="PTHR33149">
    <property type="entry name" value="PHOTOSYSTEM II PROTEIN D1"/>
    <property type="match status" value="1"/>
</dbReference>
<dbReference type="Pfam" id="PF00124">
    <property type="entry name" value="Photo_RC"/>
    <property type="match status" value="1"/>
</dbReference>
<dbReference type="PRINTS" id="PR00256">
    <property type="entry name" value="REACTNCENTRE"/>
</dbReference>
<dbReference type="SUPFAM" id="SSF81483">
    <property type="entry name" value="Bacterial photosystem II reaction centre, L and M subunits"/>
    <property type="match status" value="1"/>
</dbReference>
<dbReference type="PROSITE" id="PS00244">
    <property type="entry name" value="REACTION_CENTER"/>
    <property type="match status" value="1"/>
</dbReference>
<comment type="function">
    <text evidence="2">Photosystem II (PSII) is a light-driven water:plastoquinone oxidoreductase that uses light energy to abstract electrons from H(2)O, generating O(2) and a proton gradient subsequently used for ATP formation. It consists of a core antenna complex that captures photons, and an electron transfer chain that converts photonic excitation into a charge separation. The D1/D2 (PsbA/PsbD) reaction center heterodimer binds P680, the primary electron donor of PSII as well as several subsequent electron acceptors. D2 is needed for assembly of a stable PSII complex.</text>
</comment>
<comment type="catalytic activity">
    <reaction evidence="2">
        <text>2 a plastoquinone + 4 hnu + 2 H2O = 2 a plastoquinol + O2</text>
        <dbReference type="Rhea" id="RHEA:36359"/>
        <dbReference type="Rhea" id="RHEA-COMP:9561"/>
        <dbReference type="Rhea" id="RHEA-COMP:9562"/>
        <dbReference type="ChEBI" id="CHEBI:15377"/>
        <dbReference type="ChEBI" id="CHEBI:15379"/>
        <dbReference type="ChEBI" id="CHEBI:17757"/>
        <dbReference type="ChEBI" id="CHEBI:30212"/>
        <dbReference type="ChEBI" id="CHEBI:62192"/>
        <dbReference type="EC" id="1.10.3.9"/>
    </reaction>
</comment>
<comment type="cofactor">
    <text evidence="2">The D1/D2 heterodimer binds P680, chlorophylls that are the primary electron donor of PSII, and subsequent electron acceptors. It shares a non-heme iron and each subunit binds pheophytin, quinone, additional chlorophylls, carotenoids and lipids. There is also a Cl(-1) ion associated with D1 and D2, which is required for oxygen evolution. The PSII complex binds additional chlorophylls, carotenoids and specific lipids.</text>
</comment>
<comment type="subunit">
    <text evidence="2">PSII is composed of 1 copy each of membrane proteins PsbA, PsbB, PsbC, PsbD, PsbE, PsbF, PsbH, PsbI, PsbJ, PsbK, PsbL, PsbM, PsbT, PsbX, PsbY, PsbZ, Psb30/Ycf12, at least 3 peripheral proteins of the oxygen-evolving complex and a large number of cofactors. It forms dimeric complexes.</text>
</comment>
<comment type="subcellular location">
    <subcellularLocation>
        <location evidence="2">Plastid</location>
        <location evidence="2">Chloroplast thylakoid membrane</location>
        <topology evidence="2">Multi-pass membrane protein</topology>
    </subcellularLocation>
</comment>
<comment type="miscellaneous">
    <text evidence="2">2 of the reaction center chlorophylls (ChlD1 and ChlD2) are entirely coordinated by water.</text>
</comment>
<comment type="similarity">
    <text evidence="2">Belongs to the reaction center PufL/M/PsbA/D family.</text>
</comment>
<sequence>MTIAIGKPEEKTSWFDKVDDWVRRDRFVFVGWSGLLLFPTAYLALGGWLTGTTFVTSWYTHGLASSYLEGCNFLTAAVSTPANSLGHSLLLLWGPEAQGDLTRWFQLGGLWTFVALHGAFALIGFMLRQFEIARSVKLRPYNAIAFSAPISVFVSVFLIYPLGQSGWFFAPSFGVAAIFRFILFFQGFHNWTLNPFHMMGVAGVLGAALLCAIHGATVENTLFEDGDGANTFRAFNPTQAEETYSMVTANRFWSQIFGVAFSNKRWLHFFMLFVPVTGLWMSALGVVGLALNLRAYDFVSQEIRAAEDPEFETFYTKNILLNEGIRAWMAAQDQPHEKLVFPEEVLPRGNAL</sequence>
<keyword id="KW-0007">Acetylation</keyword>
<keyword id="KW-0148">Chlorophyll</keyword>
<keyword id="KW-0150">Chloroplast</keyword>
<keyword id="KW-0157">Chromophore</keyword>
<keyword id="KW-0249">Electron transport</keyword>
<keyword id="KW-0408">Iron</keyword>
<keyword id="KW-0460">Magnesium</keyword>
<keyword id="KW-0472">Membrane</keyword>
<keyword id="KW-0479">Metal-binding</keyword>
<keyword id="KW-0560">Oxidoreductase</keyword>
<keyword id="KW-0597">Phosphoprotein</keyword>
<keyword id="KW-0602">Photosynthesis</keyword>
<keyword id="KW-0604">Photosystem II</keyword>
<keyword id="KW-0934">Plastid</keyword>
<keyword id="KW-0793">Thylakoid</keyword>
<keyword id="KW-0812">Transmembrane</keyword>
<keyword id="KW-1133">Transmembrane helix</keyword>
<keyword id="KW-0813">Transport</keyword>
<accession>A6YG76</accession>
<reference key="1">
    <citation type="journal article" date="2007" name="BMC Genomics">
        <title>The chloroplast genome sequence of the green alga Leptosira terrestris: multiple losses of the inverted repeat and extensive genome rearrangements within the Trebouxiophyceae.</title>
        <authorList>
            <person name="de Cambiaire J.-C."/>
            <person name="Otis C."/>
            <person name="Turmel M."/>
            <person name="Lemieux C."/>
        </authorList>
    </citation>
    <scope>NUCLEOTIDE SEQUENCE [LARGE SCALE GENOMIC DNA]</scope>
    <source>
        <strain>CCAP 463/2 / UTEX 333</strain>
    </source>
</reference>
<organism>
    <name type="scientific">Pleurastrum terricola</name>
    <name type="common">Filamentous green alga</name>
    <name type="synonym">Leptosira terrestris</name>
    <dbReference type="NCBI Taxonomy" id="34116"/>
    <lineage>
        <taxon>Eukaryota</taxon>
        <taxon>Viridiplantae</taxon>
        <taxon>Chlorophyta</taxon>
        <taxon>core chlorophytes</taxon>
        <taxon>Chlorophyceae</taxon>
        <taxon>CS clade</taxon>
        <taxon>Chlamydomonadales</taxon>
        <taxon>Pleurastraceae</taxon>
        <taxon>Pleurastrum</taxon>
    </lineage>
</organism>
<feature type="initiator methionine" description="Removed" evidence="1">
    <location>
        <position position="1"/>
    </location>
</feature>
<feature type="chain" id="PRO_0000359663" description="Photosystem II D2 protein">
    <location>
        <begin position="2"/>
        <end position="352"/>
    </location>
</feature>
<feature type="transmembrane region" description="Helical" evidence="2">
    <location>
        <begin position="40"/>
        <end position="60"/>
    </location>
</feature>
<feature type="transmembrane region" description="Helical" evidence="2">
    <location>
        <begin position="124"/>
        <end position="140"/>
    </location>
</feature>
<feature type="transmembrane region" description="Helical" evidence="2">
    <location>
        <begin position="152"/>
        <end position="165"/>
    </location>
</feature>
<feature type="transmembrane region" description="Helical" evidence="2">
    <location>
        <begin position="207"/>
        <end position="227"/>
    </location>
</feature>
<feature type="transmembrane region" description="Helical" evidence="2">
    <location>
        <begin position="278"/>
        <end position="294"/>
    </location>
</feature>
<feature type="binding site" description="axial binding residue" evidence="2">
    <location>
        <position position="117"/>
    </location>
    <ligand>
        <name>chlorophyll a</name>
        <dbReference type="ChEBI" id="CHEBI:58416"/>
        <label>ChlzD2</label>
    </ligand>
    <ligandPart>
        <name>Mg</name>
        <dbReference type="ChEBI" id="CHEBI:25107"/>
    </ligandPart>
</feature>
<feature type="binding site" evidence="2">
    <location>
        <position position="129"/>
    </location>
    <ligand>
        <name>pheophytin a</name>
        <dbReference type="ChEBI" id="CHEBI:136840"/>
        <label>D2</label>
    </ligand>
</feature>
<feature type="binding site" evidence="2">
    <location>
        <position position="142"/>
    </location>
    <ligand>
        <name>pheophytin a</name>
        <dbReference type="ChEBI" id="CHEBI:136840"/>
        <label>D2</label>
    </ligand>
</feature>
<feature type="binding site" description="axial binding residue" evidence="2">
    <location>
        <position position="197"/>
    </location>
    <ligand>
        <name>chlorophyll a</name>
        <dbReference type="ChEBI" id="CHEBI:58416"/>
        <label>PD2</label>
    </ligand>
    <ligandPart>
        <name>Mg</name>
        <dbReference type="ChEBI" id="CHEBI:25107"/>
    </ligandPart>
</feature>
<feature type="binding site" evidence="2">
    <location>
        <position position="214"/>
    </location>
    <ligand>
        <name>a plastoquinone</name>
        <dbReference type="ChEBI" id="CHEBI:17757"/>
        <label>Q(A)</label>
    </ligand>
</feature>
<feature type="binding site" evidence="2">
    <location>
        <position position="214"/>
    </location>
    <ligand>
        <name>Fe cation</name>
        <dbReference type="ChEBI" id="CHEBI:24875"/>
        <note>ligand shared with heterodimeric partner</note>
    </ligand>
</feature>
<feature type="binding site" evidence="2">
    <location>
        <position position="261"/>
    </location>
    <ligand>
        <name>a plastoquinone</name>
        <dbReference type="ChEBI" id="CHEBI:17757"/>
        <label>Q(A)</label>
    </ligand>
</feature>
<feature type="binding site" evidence="2">
    <location>
        <position position="268"/>
    </location>
    <ligand>
        <name>Fe cation</name>
        <dbReference type="ChEBI" id="CHEBI:24875"/>
        <note>ligand shared with heterodimeric partner</note>
    </ligand>
</feature>
<feature type="modified residue" description="N-acetylthreonine" evidence="1">
    <location>
        <position position="2"/>
    </location>
</feature>
<feature type="modified residue" description="Phosphothreonine" evidence="1">
    <location>
        <position position="2"/>
    </location>
</feature>
<protein>
    <recommendedName>
        <fullName evidence="2">Photosystem II D2 protein</fullName>
        <shortName evidence="2">PSII D2 protein</shortName>
        <ecNumber evidence="2">1.10.3.9</ecNumber>
    </recommendedName>
    <alternativeName>
        <fullName evidence="2">Photosystem Q(A) protein</fullName>
    </alternativeName>
</protein>
<proteinExistence type="inferred from homology"/>